<dbReference type="EC" id="2.4.99.28" evidence="1"/>
<dbReference type="EMBL" id="CP000247">
    <property type="protein sequence ID" value="ABG71278.1"/>
    <property type="molecule type" value="Genomic_DNA"/>
</dbReference>
<dbReference type="RefSeq" id="WP_000047069.1">
    <property type="nucleotide sequence ID" value="NC_008253.1"/>
</dbReference>
<dbReference type="SMR" id="Q0TCQ1"/>
<dbReference type="CAZy" id="GT51">
    <property type="family name" value="Glycosyltransferase Family 51"/>
</dbReference>
<dbReference type="KEGG" id="ecp:ECP_3296"/>
<dbReference type="HOGENOM" id="CLU_006354_1_1_6"/>
<dbReference type="UniPathway" id="UPA00219"/>
<dbReference type="Proteomes" id="UP000009182">
    <property type="component" value="Chromosome"/>
</dbReference>
<dbReference type="GO" id="GO:0009274">
    <property type="term" value="C:peptidoglycan-based cell wall"/>
    <property type="evidence" value="ECO:0007669"/>
    <property type="project" value="InterPro"/>
</dbReference>
<dbReference type="GO" id="GO:0005886">
    <property type="term" value="C:plasma membrane"/>
    <property type="evidence" value="ECO:0007669"/>
    <property type="project" value="UniProtKB-SubCell"/>
</dbReference>
<dbReference type="GO" id="GO:0016763">
    <property type="term" value="F:pentosyltransferase activity"/>
    <property type="evidence" value="ECO:0007669"/>
    <property type="project" value="InterPro"/>
</dbReference>
<dbReference type="GO" id="GO:0008955">
    <property type="term" value="F:peptidoglycan glycosyltransferase activity"/>
    <property type="evidence" value="ECO:0007669"/>
    <property type="project" value="UniProtKB-UniRule"/>
</dbReference>
<dbReference type="GO" id="GO:0071555">
    <property type="term" value="P:cell wall organization"/>
    <property type="evidence" value="ECO:0007669"/>
    <property type="project" value="UniProtKB-KW"/>
</dbReference>
<dbReference type="GO" id="GO:0009252">
    <property type="term" value="P:peptidoglycan biosynthetic process"/>
    <property type="evidence" value="ECO:0007669"/>
    <property type="project" value="UniProtKB-UniRule"/>
</dbReference>
<dbReference type="GO" id="GO:0008360">
    <property type="term" value="P:regulation of cell shape"/>
    <property type="evidence" value="ECO:0007669"/>
    <property type="project" value="UniProtKB-KW"/>
</dbReference>
<dbReference type="FunFam" id="1.10.3810.10:FF:000004">
    <property type="entry name" value="Biosynthetic peptidoglycan transglycosylase"/>
    <property type="match status" value="1"/>
</dbReference>
<dbReference type="Gene3D" id="1.10.3810.10">
    <property type="entry name" value="Biosynthetic peptidoglycan transglycosylase-like"/>
    <property type="match status" value="1"/>
</dbReference>
<dbReference type="HAMAP" id="MF_00766">
    <property type="entry name" value="PGT_MtgA"/>
    <property type="match status" value="1"/>
</dbReference>
<dbReference type="InterPro" id="IPR001264">
    <property type="entry name" value="Glyco_trans_51"/>
</dbReference>
<dbReference type="InterPro" id="IPR023346">
    <property type="entry name" value="Lysozyme-like_dom_sf"/>
</dbReference>
<dbReference type="InterPro" id="IPR036950">
    <property type="entry name" value="PBP_transglycosylase"/>
</dbReference>
<dbReference type="InterPro" id="IPR011812">
    <property type="entry name" value="Pep_trsgly"/>
</dbReference>
<dbReference type="NCBIfam" id="TIGR02070">
    <property type="entry name" value="mono_pep_trsgly"/>
    <property type="match status" value="1"/>
</dbReference>
<dbReference type="PANTHER" id="PTHR30400:SF0">
    <property type="entry name" value="BIOSYNTHETIC PEPTIDOGLYCAN TRANSGLYCOSYLASE"/>
    <property type="match status" value="1"/>
</dbReference>
<dbReference type="PANTHER" id="PTHR30400">
    <property type="entry name" value="MONOFUNCTIONAL BIOSYNTHETIC PEPTIDOGLYCAN TRANSGLYCOSYLASE"/>
    <property type="match status" value="1"/>
</dbReference>
<dbReference type="Pfam" id="PF00912">
    <property type="entry name" value="Transgly"/>
    <property type="match status" value="1"/>
</dbReference>
<dbReference type="SUPFAM" id="SSF53955">
    <property type="entry name" value="Lysozyme-like"/>
    <property type="match status" value="1"/>
</dbReference>
<proteinExistence type="inferred from homology"/>
<organism>
    <name type="scientific">Escherichia coli O6:K15:H31 (strain 536 / UPEC)</name>
    <dbReference type="NCBI Taxonomy" id="362663"/>
    <lineage>
        <taxon>Bacteria</taxon>
        <taxon>Pseudomonadati</taxon>
        <taxon>Pseudomonadota</taxon>
        <taxon>Gammaproteobacteria</taxon>
        <taxon>Enterobacterales</taxon>
        <taxon>Enterobacteriaceae</taxon>
        <taxon>Escherichia</taxon>
    </lineage>
</organism>
<accession>Q0TCQ1</accession>
<keyword id="KW-0997">Cell inner membrane</keyword>
<keyword id="KW-1003">Cell membrane</keyword>
<keyword id="KW-0133">Cell shape</keyword>
<keyword id="KW-0961">Cell wall biogenesis/degradation</keyword>
<keyword id="KW-0328">Glycosyltransferase</keyword>
<keyword id="KW-0472">Membrane</keyword>
<keyword id="KW-0573">Peptidoglycan synthesis</keyword>
<keyword id="KW-0808">Transferase</keyword>
<keyword id="KW-0812">Transmembrane</keyword>
<keyword id="KW-1133">Transmembrane helix</keyword>
<name>MTGA_ECOL5</name>
<comment type="function">
    <text evidence="1">Peptidoglycan polymerase that catalyzes glycan chain elongation from lipid-linked precursors.</text>
</comment>
<comment type="catalytic activity">
    <reaction evidence="1">
        <text>[GlcNAc-(1-&gt;4)-Mur2Ac(oyl-L-Ala-gamma-D-Glu-L-Lys-D-Ala-D-Ala)](n)-di-trans,octa-cis-undecaprenyl diphosphate + beta-D-GlcNAc-(1-&gt;4)-Mur2Ac(oyl-L-Ala-gamma-D-Glu-L-Lys-D-Ala-D-Ala)-di-trans,octa-cis-undecaprenyl diphosphate = [GlcNAc-(1-&gt;4)-Mur2Ac(oyl-L-Ala-gamma-D-Glu-L-Lys-D-Ala-D-Ala)](n+1)-di-trans,octa-cis-undecaprenyl diphosphate + di-trans,octa-cis-undecaprenyl diphosphate + H(+)</text>
        <dbReference type="Rhea" id="RHEA:23708"/>
        <dbReference type="Rhea" id="RHEA-COMP:9602"/>
        <dbReference type="Rhea" id="RHEA-COMP:9603"/>
        <dbReference type="ChEBI" id="CHEBI:15378"/>
        <dbReference type="ChEBI" id="CHEBI:58405"/>
        <dbReference type="ChEBI" id="CHEBI:60033"/>
        <dbReference type="ChEBI" id="CHEBI:78435"/>
        <dbReference type="EC" id="2.4.99.28"/>
    </reaction>
</comment>
<comment type="pathway">
    <text evidence="1">Cell wall biogenesis; peptidoglycan biosynthesis.</text>
</comment>
<comment type="subcellular location">
    <subcellularLocation>
        <location evidence="1">Cell inner membrane</location>
        <topology evidence="1">Single-pass membrane protein</topology>
    </subcellularLocation>
</comment>
<comment type="similarity">
    <text evidence="1">Belongs to the glycosyltransferase 51 family.</text>
</comment>
<gene>
    <name evidence="1" type="primary">mtgA</name>
    <name type="ordered locus">ECP_3296</name>
</gene>
<evidence type="ECO:0000255" key="1">
    <source>
        <dbReference type="HAMAP-Rule" id="MF_00766"/>
    </source>
</evidence>
<feature type="chain" id="PRO_0000257670" description="Biosynthetic peptidoglycan transglycosylase">
    <location>
        <begin position="1"/>
        <end position="242"/>
    </location>
</feature>
<feature type="transmembrane region" description="Helical" evidence="1">
    <location>
        <begin position="19"/>
        <end position="39"/>
    </location>
</feature>
<sequence>MSKSRLTVFSFVRRFLLRLMVVLAIFWGGGIALFSVAPVPFSAVMVERQVSAWLHGNFRYVAHSDWVSMDQISPWMGLAVIAAEDQKFPEHWGFDVASIEQALAHNERNENRIRGASTISQQTAKNLFLWDGRSWVRKGLEAGLTLGIETVWSKKRILTVYLNIAEFGDGVFGVEAAAQRYFHKPASKLTRSEAALLAAVLPNPLRFKVSAPSGYVRSRQAWILRQMYQLGGEPFMQQHQLD</sequence>
<protein>
    <recommendedName>
        <fullName evidence="1">Biosynthetic peptidoglycan transglycosylase</fullName>
        <ecNumber evidence="1">2.4.99.28</ecNumber>
    </recommendedName>
    <alternativeName>
        <fullName evidence="1">Glycan polymerase</fullName>
    </alternativeName>
    <alternativeName>
        <fullName evidence="1">Peptidoglycan glycosyltransferase MtgA</fullName>
        <shortName evidence="1">PGT</shortName>
    </alternativeName>
</protein>
<reference key="1">
    <citation type="journal article" date="2006" name="Mol. Microbiol.">
        <title>Role of pathogenicity island-associated integrases in the genome plasticity of uropathogenic Escherichia coli strain 536.</title>
        <authorList>
            <person name="Hochhut B."/>
            <person name="Wilde C."/>
            <person name="Balling G."/>
            <person name="Middendorf B."/>
            <person name="Dobrindt U."/>
            <person name="Brzuszkiewicz E."/>
            <person name="Gottschalk G."/>
            <person name="Carniel E."/>
            <person name="Hacker J."/>
        </authorList>
    </citation>
    <scope>NUCLEOTIDE SEQUENCE [LARGE SCALE GENOMIC DNA]</scope>
    <source>
        <strain>536 / UPEC</strain>
    </source>
</reference>